<feature type="chain" id="PRO_0000229533" description="Small ribosomal subunit protein bS6">
    <location>
        <begin position="1"/>
        <end position="132"/>
    </location>
</feature>
<comment type="function">
    <text evidence="1">Binds together with bS18 to 16S ribosomal RNA.</text>
</comment>
<comment type="similarity">
    <text evidence="1">Belongs to the bacterial ribosomal protein bS6 family.</text>
</comment>
<gene>
    <name evidence="1" type="primary">rpsF</name>
    <name type="ordered locus">Cag_0094</name>
</gene>
<evidence type="ECO:0000255" key="1">
    <source>
        <dbReference type="HAMAP-Rule" id="MF_00360"/>
    </source>
</evidence>
<evidence type="ECO:0000305" key="2"/>
<protein>
    <recommendedName>
        <fullName evidence="1">Small ribosomal subunit protein bS6</fullName>
    </recommendedName>
    <alternativeName>
        <fullName evidence="2">30S ribosomal protein S6</fullName>
    </alternativeName>
</protein>
<proteinExistence type="inferred from homology"/>
<name>RS6_CHLCH</name>
<keyword id="KW-0687">Ribonucleoprotein</keyword>
<keyword id="KW-0689">Ribosomal protein</keyword>
<keyword id="KW-0694">RNA-binding</keyword>
<keyword id="KW-0699">rRNA-binding</keyword>
<dbReference type="EMBL" id="CP000108">
    <property type="protein sequence ID" value="ABB27372.1"/>
    <property type="molecule type" value="Genomic_DNA"/>
</dbReference>
<dbReference type="SMR" id="Q3ANR5"/>
<dbReference type="STRING" id="340177.Cag_0094"/>
<dbReference type="KEGG" id="cch:Cag_0094"/>
<dbReference type="eggNOG" id="COG0360">
    <property type="taxonomic scope" value="Bacteria"/>
</dbReference>
<dbReference type="HOGENOM" id="CLU_113441_4_1_10"/>
<dbReference type="OrthoDB" id="9812702at2"/>
<dbReference type="GO" id="GO:0005737">
    <property type="term" value="C:cytoplasm"/>
    <property type="evidence" value="ECO:0007669"/>
    <property type="project" value="UniProtKB-ARBA"/>
</dbReference>
<dbReference type="GO" id="GO:1990904">
    <property type="term" value="C:ribonucleoprotein complex"/>
    <property type="evidence" value="ECO:0007669"/>
    <property type="project" value="UniProtKB-KW"/>
</dbReference>
<dbReference type="GO" id="GO:0005840">
    <property type="term" value="C:ribosome"/>
    <property type="evidence" value="ECO:0007669"/>
    <property type="project" value="UniProtKB-KW"/>
</dbReference>
<dbReference type="GO" id="GO:0070181">
    <property type="term" value="F:small ribosomal subunit rRNA binding"/>
    <property type="evidence" value="ECO:0007669"/>
    <property type="project" value="TreeGrafter"/>
</dbReference>
<dbReference type="GO" id="GO:0003735">
    <property type="term" value="F:structural constituent of ribosome"/>
    <property type="evidence" value="ECO:0007669"/>
    <property type="project" value="InterPro"/>
</dbReference>
<dbReference type="GO" id="GO:0006412">
    <property type="term" value="P:translation"/>
    <property type="evidence" value="ECO:0007669"/>
    <property type="project" value="UniProtKB-UniRule"/>
</dbReference>
<dbReference type="CDD" id="cd00473">
    <property type="entry name" value="bS6"/>
    <property type="match status" value="1"/>
</dbReference>
<dbReference type="Gene3D" id="3.30.70.60">
    <property type="match status" value="1"/>
</dbReference>
<dbReference type="HAMAP" id="MF_00360">
    <property type="entry name" value="Ribosomal_bS6"/>
    <property type="match status" value="1"/>
</dbReference>
<dbReference type="InterPro" id="IPR000529">
    <property type="entry name" value="Ribosomal_bS6"/>
</dbReference>
<dbReference type="InterPro" id="IPR035980">
    <property type="entry name" value="Ribosomal_bS6_sf"/>
</dbReference>
<dbReference type="InterPro" id="IPR020814">
    <property type="entry name" value="Ribosomal_S6_plastid/chlpt"/>
</dbReference>
<dbReference type="InterPro" id="IPR014717">
    <property type="entry name" value="Transl_elong_EF1B/ribsomal_bS6"/>
</dbReference>
<dbReference type="NCBIfam" id="TIGR00166">
    <property type="entry name" value="S6"/>
    <property type="match status" value="1"/>
</dbReference>
<dbReference type="PANTHER" id="PTHR21011">
    <property type="entry name" value="MITOCHONDRIAL 28S RIBOSOMAL PROTEIN S6"/>
    <property type="match status" value="1"/>
</dbReference>
<dbReference type="PANTHER" id="PTHR21011:SF1">
    <property type="entry name" value="SMALL RIBOSOMAL SUBUNIT PROTEIN BS6M"/>
    <property type="match status" value="1"/>
</dbReference>
<dbReference type="Pfam" id="PF01250">
    <property type="entry name" value="Ribosomal_S6"/>
    <property type="match status" value="1"/>
</dbReference>
<dbReference type="SUPFAM" id="SSF54995">
    <property type="entry name" value="Ribosomal protein S6"/>
    <property type="match status" value="1"/>
</dbReference>
<reference key="1">
    <citation type="submission" date="2005-08" db="EMBL/GenBank/DDBJ databases">
        <title>Complete sequence of Chlorobium chlorochromatii CaD3.</title>
        <authorList>
            <consortium name="US DOE Joint Genome Institute"/>
            <person name="Copeland A."/>
            <person name="Lucas S."/>
            <person name="Lapidus A."/>
            <person name="Barry K."/>
            <person name="Detter J.C."/>
            <person name="Glavina T."/>
            <person name="Hammon N."/>
            <person name="Israni S."/>
            <person name="Pitluck S."/>
            <person name="Bryant D."/>
            <person name="Schmutz J."/>
            <person name="Larimer F."/>
            <person name="Land M."/>
            <person name="Kyrpides N."/>
            <person name="Ivanova N."/>
            <person name="Richardson P."/>
        </authorList>
    </citation>
    <scope>NUCLEOTIDE SEQUENCE [LARGE SCALE GENOMIC DNA]</scope>
    <source>
        <strain>CaD3</strain>
    </source>
</reference>
<accession>Q3ANR5</accession>
<sequence>MKTNKLYECTAIIDGGLQDEAVAATLAMVQRVITEKGGTINSVLDLGRRKTAYPIKKKSMGYYVHIEFNAAAPVIAEIERVLRYEEELLRYLIIQLTTPLLEMRKRVEKYSVVLGSVEEGASTSGDAEGSNE</sequence>
<organism>
    <name type="scientific">Chlorobium chlorochromatii (strain CaD3)</name>
    <dbReference type="NCBI Taxonomy" id="340177"/>
    <lineage>
        <taxon>Bacteria</taxon>
        <taxon>Pseudomonadati</taxon>
        <taxon>Chlorobiota</taxon>
        <taxon>Chlorobiia</taxon>
        <taxon>Chlorobiales</taxon>
        <taxon>Chlorobiaceae</taxon>
        <taxon>Chlorobium/Pelodictyon group</taxon>
        <taxon>Chlorobium</taxon>
    </lineage>
</organism>